<feature type="chain" id="PRO_0000127556" description="Large ribosomal subunit protein eL15z">
    <location>
        <begin position="1"/>
        <end position="204"/>
    </location>
</feature>
<feature type="region of interest" description="Disordered" evidence="1">
    <location>
        <begin position="161"/>
        <end position="204"/>
    </location>
</feature>
<feature type="compositionally biased region" description="Basic residues" evidence="1">
    <location>
        <begin position="171"/>
        <end position="192"/>
    </location>
</feature>
<feature type="compositionally biased region" description="Polar residues" evidence="1">
    <location>
        <begin position="193"/>
        <end position="204"/>
    </location>
</feature>
<accession>O23515</accession>
<name>RL151_ARATH</name>
<reference key="1">
    <citation type="journal article" date="1998" name="Nature">
        <title>Analysis of 1.9 Mb of contiguous sequence from chromosome 4 of Arabidopsis thaliana.</title>
        <authorList>
            <person name="Bevan M."/>
            <person name="Bancroft I."/>
            <person name="Bent E."/>
            <person name="Love K."/>
            <person name="Goodman H.M."/>
            <person name="Dean C."/>
            <person name="Bergkamp R."/>
            <person name="Dirkse W."/>
            <person name="van Staveren M."/>
            <person name="Stiekema W."/>
            <person name="Drost L."/>
            <person name="Ridley P."/>
            <person name="Hudson S.-A."/>
            <person name="Patel K."/>
            <person name="Murphy G."/>
            <person name="Piffanelli P."/>
            <person name="Wedler H."/>
            <person name="Wedler E."/>
            <person name="Wambutt R."/>
            <person name="Weitzenegger T."/>
            <person name="Pohl T."/>
            <person name="Terryn N."/>
            <person name="Gielen J."/>
            <person name="Villarroel R."/>
            <person name="De Clercq R."/>
            <person name="van Montagu M."/>
            <person name="Lecharny A."/>
            <person name="Aubourg S."/>
            <person name="Gy I."/>
            <person name="Kreis M."/>
            <person name="Lao N."/>
            <person name="Kavanagh T."/>
            <person name="Hempel S."/>
            <person name="Kotter P."/>
            <person name="Entian K.-D."/>
            <person name="Rieger M."/>
            <person name="Schaefer M."/>
            <person name="Funk B."/>
            <person name="Mueller-Auer S."/>
            <person name="Silvey M."/>
            <person name="James R."/>
            <person name="Monfort A."/>
            <person name="Pons A."/>
            <person name="Puigdomenech P."/>
            <person name="Douka A."/>
            <person name="Voukelatou E."/>
            <person name="Milioni D."/>
            <person name="Hatzopoulos P."/>
            <person name="Piravandi E."/>
            <person name="Obermaier B."/>
            <person name="Hilbert H."/>
            <person name="Duesterhoeft A."/>
            <person name="Moores T."/>
            <person name="Jones J.D.G."/>
            <person name="Eneva T."/>
            <person name="Palme K."/>
            <person name="Benes V."/>
            <person name="Rechmann S."/>
            <person name="Ansorge W."/>
            <person name="Cooke R."/>
            <person name="Berger C."/>
            <person name="Delseny M."/>
            <person name="Voet M."/>
            <person name="Volckaert G."/>
            <person name="Mewes H.-W."/>
            <person name="Klosterman S."/>
            <person name="Schueller C."/>
            <person name="Chalwatzis N."/>
        </authorList>
    </citation>
    <scope>NUCLEOTIDE SEQUENCE [LARGE SCALE GENOMIC DNA]</scope>
    <source>
        <strain>cv. Columbia</strain>
    </source>
</reference>
<reference key="2">
    <citation type="journal article" date="1999" name="Nature">
        <title>Sequence and analysis of chromosome 4 of the plant Arabidopsis thaliana.</title>
        <authorList>
            <person name="Mayer K.F.X."/>
            <person name="Schueller C."/>
            <person name="Wambutt R."/>
            <person name="Murphy G."/>
            <person name="Volckaert G."/>
            <person name="Pohl T."/>
            <person name="Duesterhoeft A."/>
            <person name="Stiekema W."/>
            <person name="Entian K.-D."/>
            <person name="Terryn N."/>
            <person name="Harris B."/>
            <person name="Ansorge W."/>
            <person name="Brandt P."/>
            <person name="Grivell L.A."/>
            <person name="Rieger M."/>
            <person name="Weichselgartner M."/>
            <person name="de Simone V."/>
            <person name="Obermaier B."/>
            <person name="Mache R."/>
            <person name="Mueller M."/>
            <person name="Kreis M."/>
            <person name="Delseny M."/>
            <person name="Puigdomenech P."/>
            <person name="Watson M."/>
            <person name="Schmidtheini T."/>
            <person name="Reichert B."/>
            <person name="Portetelle D."/>
            <person name="Perez-Alonso M."/>
            <person name="Boutry M."/>
            <person name="Bancroft I."/>
            <person name="Vos P."/>
            <person name="Hoheisel J."/>
            <person name="Zimmermann W."/>
            <person name="Wedler H."/>
            <person name="Ridley P."/>
            <person name="Langham S.-A."/>
            <person name="McCullagh B."/>
            <person name="Bilham L."/>
            <person name="Robben J."/>
            <person name="van der Schueren J."/>
            <person name="Grymonprez B."/>
            <person name="Chuang Y.-J."/>
            <person name="Vandenbussche F."/>
            <person name="Braeken M."/>
            <person name="Weltjens I."/>
            <person name="Voet M."/>
            <person name="Bastiaens I."/>
            <person name="Aert R."/>
            <person name="Defoor E."/>
            <person name="Weitzenegger T."/>
            <person name="Bothe G."/>
            <person name="Ramsperger U."/>
            <person name="Hilbert H."/>
            <person name="Braun M."/>
            <person name="Holzer E."/>
            <person name="Brandt A."/>
            <person name="Peters S."/>
            <person name="van Staveren M."/>
            <person name="Dirkse W."/>
            <person name="Mooijman P."/>
            <person name="Klein Lankhorst R."/>
            <person name="Rose M."/>
            <person name="Hauf J."/>
            <person name="Koetter P."/>
            <person name="Berneiser S."/>
            <person name="Hempel S."/>
            <person name="Feldpausch M."/>
            <person name="Lamberth S."/>
            <person name="Van den Daele H."/>
            <person name="De Keyser A."/>
            <person name="Buysshaert C."/>
            <person name="Gielen J."/>
            <person name="Villarroel R."/>
            <person name="De Clercq R."/>
            <person name="van Montagu M."/>
            <person name="Rogers J."/>
            <person name="Cronin A."/>
            <person name="Quail M.A."/>
            <person name="Bray-Allen S."/>
            <person name="Clark L."/>
            <person name="Doggett J."/>
            <person name="Hall S."/>
            <person name="Kay M."/>
            <person name="Lennard N."/>
            <person name="McLay K."/>
            <person name="Mayes R."/>
            <person name="Pettett A."/>
            <person name="Rajandream M.A."/>
            <person name="Lyne M."/>
            <person name="Benes V."/>
            <person name="Rechmann S."/>
            <person name="Borkova D."/>
            <person name="Bloecker H."/>
            <person name="Scharfe M."/>
            <person name="Grimm M."/>
            <person name="Loehnert T.-H."/>
            <person name="Dose S."/>
            <person name="de Haan M."/>
            <person name="Maarse A.C."/>
            <person name="Schaefer M."/>
            <person name="Mueller-Auer S."/>
            <person name="Gabel C."/>
            <person name="Fuchs M."/>
            <person name="Fartmann B."/>
            <person name="Granderath K."/>
            <person name="Dauner D."/>
            <person name="Herzl A."/>
            <person name="Neumann S."/>
            <person name="Argiriou A."/>
            <person name="Vitale D."/>
            <person name="Liguori R."/>
            <person name="Piravandi E."/>
            <person name="Massenet O."/>
            <person name="Quigley F."/>
            <person name="Clabauld G."/>
            <person name="Muendlein A."/>
            <person name="Felber R."/>
            <person name="Schnabl S."/>
            <person name="Hiller R."/>
            <person name="Schmidt W."/>
            <person name="Lecharny A."/>
            <person name="Aubourg S."/>
            <person name="Chefdor F."/>
            <person name="Cooke R."/>
            <person name="Berger C."/>
            <person name="Monfort A."/>
            <person name="Casacuberta E."/>
            <person name="Gibbons T."/>
            <person name="Weber N."/>
            <person name="Vandenbol M."/>
            <person name="Bargues M."/>
            <person name="Terol J."/>
            <person name="Torres A."/>
            <person name="Perez-Perez A."/>
            <person name="Purnelle B."/>
            <person name="Bent E."/>
            <person name="Johnson S."/>
            <person name="Tacon D."/>
            <person name="Jesse T."/>
            <person name="Heijnen L."/>
            <person name="Schwarz S."/>
            <person name="Scholler P."/>
            <person name="Heber S."/>
            <person name="Francs P."/>
            <person name="Bielke C."/>
            <person name="Frishman D."/>
            <person name="Haase D."/>
            <person name="Lemcke K."/>
            <person name="Mewes H.-W."/>
            <person name="Stocker S."/>
            <person name="Zaccaria P."/>
            <person name="Bevan M."/>
            <person name="Wilson R.K."/>
            <person name="de la Bastide M."/>
            <person name="Habermann K."/>
            <person name="Parnell L."/>
            <person name="Dedhia N."/>
            <person name="Gnoj L."/>
            <person name="Schutz K."/>
            <person name="Huang E."/>
            <person name="Spiegel L."/>
            <person name="Sekhon M."/>
            <person name="Murray J."/>
            <person name="Sheet P."/>
            <person name="Cordes M."/>
            <person name="Abu-Threideh J."/>
            <person name="Stoneking T."/>
            <person name="Kalicki J."/>
            <person name="Graves T."/>
            <person name="Harmon G."/>
            <person name="Edwards J."/>
            <person name="Latreille P."/>
            <person name="Courtney L."/>
            <person name="Cloud J."/>
            <person name="Abbott A."/>
            <person name="Scott K."/>
            <person name="Johnson D."/>
            <person name="Minx P."/>
            <person name="Bentley D."/>
            <person name="Fulton B."/>
            <person name="Miller N."/>
            <person name="Greco T."/>
            <person name="Kemp K."/>
            <person name="Kramer J."/>
            <person name="Fulton L."/>
            <person name="Mardis E."/>
            <person name="Dante M."/>
            <person name="Pepin K."/>
            <person name="Hillier L.W."/>
            <person name="Nelson J."/>
            <person name="Spieth J."/>
            <person name="Ryan E."/>
            <person name="Andrews S."/>
            <person name="Geisel C."/>
            <person name="Layman D."/>
            <person name="Du H."/>
            <person name="Ali J."/>
            <person name="Berghoff A."/>
            <person name="Jones K."/>
            <person name="Drone K."/>
            <person name="Cotton M."/>
            <person name="Joshu C."/>
            <person name="Antonoiu B."/>
            <person name="Zidanic M."/>
            <person name="Strong C."/>
            <person name="Sun H."/>
            <person name="Lamar B."/>
            <person name="Yordan C."/>
            <person name="Ma P."/>
            <person name="Zhong J."/>
            <person name="Preston R."/>
            <person name="Vil D."/>
            <person name="Shekher M."/>
            <person name="Matero A."/>
            <person name="Shah R."/>
            <person name="Swaby I.K."/>
            <person name="O'Shaughnessy A."/>
            <person name="Rodriguez M."/>
            <person name="Hoffman J."/>
            <person name="Till S."/>
            <person name="Granat S."/>
            <person name="Shohdy N."/>
            <person name="Hasegawa A."/>
            <person name="Hameed A."/>
            <person name="Lodhi M."/>
            <person name="Johnson A."/>
            <person name="Chen E."/>
            <person name="Marra M.A."/>
            <person name="Martienssen R."/>
            <person name="McCombie W.R."/>
        </authorList>
    </citation>
    <scope>NUCLEOTIDE SEQUENCE [LARGE SCALE GENOMIC DNA]</scope>
    <source>
        <strain>cv. Columbia</strain>
    </source>
</reference>
<reference key="3">
    <citation type="journal article" date="2017" name="Plant J.">
        <title>Araport11: a complete reannotation of the Arabidopsis thaliana reference genome.</title>
        <authorList>
            <person name="Cheng C.Y."/>
            <person name="Krishnakumar V."/>
            <person name="Chan A.P."/>
            <person name="Thibaud-Nissen F."/>
            <person name="Schobel S."/>
            <person name="Town C.D."/>
        </authorList>
    </citation>
    <scope>GENOME REANNOTATION</scope>
    <source>
        <strain>cv. Columbia</strain>
    </source>
</reference>
<reference key="4">
    <citation type="journal article" date="2003" name="Science">
        <title>Empirical analysis of transcriptional activity in the Arabidopsis genome.</title>
        <authorList>
            <person name="Yamada K."/>
            <person name="Lim J."/>
            <person name="Dale J.M."/>
            <person name="Chen H."/>
            <person name="Shinn P."/>
            <person name="Palm C.J."/>
            <person name="Southwick A.M."/>
            <person name="Wu H.C."/>
            <person name="Kim C.J."/>
            <person name="Nguyen M."/>
            <person name="Pham P.K."/>
            <person name="Cheuk R.F."/>
            <person name="Karlin-Newmann G."/>
            <person name="Liu S.X."/>
            <person name="Lam B."/>
            <person name="Sakano H."/>
            <person name="Wu T."/>
            <person name="Yu G."/>
            <person name="Miranda M."/>
            <person name="Quach H.L."/>
            <person name="Tripp M."/>
            <person name="Chang C.H."/>
            <person name="Lee J.M."/>
            <person name="Toriumi M.J."/>
            <person name="Chan M.M."/>
            <person name="Tang C.C."/>
            <person name="Onodera C.S."/>
            <person name="Deng J.M."/>
            <person name="Akiyama K."/>
            <person name="Ansari Y."/>
            <person name="Arakawa T."/>
            <person name="Banh J."/>
            <person name="Banno F."/>
            <person name="Bowser L."/>
            <person name="Brooks S.Y."/>
            <person name="Carninci P."/>
            <person name="Chao Q."/>
            <person name="Choy N."/>
            <person name="Enju A."/>
            <person name="Goldsmith A.D."/>
            <person name="Gurjal M."/>
            <person name="Hansen N.F."/>
            <person name="Hayashizaki Y."/>
            <person name="Johnson-Hopson C."/>
            <person name="Hsuan V.W."/>
            <person name="Iida K."/>
            <person name="Karnes M."/>
            <person name="Khan S."/>
            <person name="Koesema E."/>
            <person name="Ishida J."/>
            <person name="Jiang P.X."/>
            <person name="Jones T."/>
            <person name="Kawai J."/>
            <person name="Kamiya A."/>
            <person name="Meyers C."/>
            <person name="Nakajima M."/>
            <person name="Narusaka M."/>
            <person name="Seki M."/>
            <person name="Sakurai T."/>
            <person name="Satou M."/>
            <person name="Tamse R."/>
            <person name="Vaysberg M."/>
            <person name="Wallender E.K."/>
            <person name="Wong C."/>
            <person name="Yamamura Y."/>
            <person name="Yuan S."/>
            <person name="Shinozaki K."/>
            <person name="Davis R.W."/>
            <person name="Theologis A."/>
            <person name="Ecker J.R."/>
        </authorList>
    </citation>
    <scope>NUCLEOTIDE SEQUENCE [LARGE SCALE MRNA]</scope>
    <source>
        <strain>cv. Columbia</strain>
    </source>
</reference>
<reference key="5">
    <citation type="submission" date="2002-03" db="EMBL/GenBank/DDBJ databases">
        <title>Full-length cDNA from Arabidopsis thaliana.</title>
        <authorList>
            <person name="Brover V.V."/>
            <person name="Troukhan M.E."/>
            <person name="Alexandrov N.A."/>
            <person name="Lu Y.-P."/>
            <person name="Flavell R.B."/>
            <person name="Feldmann K.A."/>
        </authorList>
    </citation>
    <scope>NUCLEOTIDE SEQUENCE [LARGE SCALE MRNA]</scope>
</reference>
<reference key="6">
    <citation type="journal article" date="2001" name="Plant Physiol.">
        <title>The organization of cytoplasmic ribosomal protein genes in the Arabidopsis genome.</title>
        <authorList>
            <person name="Barakat A."/>
            <person name="Szick-Miranda K."/>
            <person name="Chang I.-F."/>
            <person name="Guyot R."/>
            <person name="Blanc G."/>
            <person name="Cooke R."/>
            <person name="Delseny M."/>
            <person name="Bailey-Serres J."/>
        </authorList>
    </citation>
    <scope>GENE FAMILY ORGANIZATION</scope>
    <scope>NOMENCLATURE</scope>
</reference>
<reference key="7">
    <citation type="journal article" date="2023" name="Plant Cell">
        <title>An updated nomenclature for plant ribosomal protein genes.</title>
        <authorList>
            <person name="Scarpin M.R."/>
            <person name="Busche M."/>
            <person name="Martinez R.E."/>
            <person name="Harper L.C."/>
            <person name="Reiser L."/>
            <person name="Szakonyi D."/>
            <person name="Merchante C."/>
            <person name="Lan T."/>
            <person name="Xiong W."/>
            <person name="Mo B."/>
            <person name="Tang G."/>
            <person name="Chen X."/>
            <person name="Bailey-Serres J."/>
            <person name="Browning K.S."/>
            <person name="Brunkard J.O."/>
        </authorList>
    </citation>
    <scope>NOMENCLATURE</scope>
</reference>
<keyword id="KW-1185">Reference proteome</keyword>
<keyword id="KW-0687">Ribonucleoprotein</keyword>
<keyword id="KW-0689">Ribosomal protein</keyword>
<gene>
    <name type="primary">RPL15A</name>
    <name type="ordered locus">At4g16720</name>
    <name type="ORF">dl4385c</name>
    <name type="ORF">FCAALL.416</name>
</gene>
<comment type="similarity">
    <text evidence="3">Belongs to the eukaryotic ribosomal protein eL15 family.</text>
</comment>
<evidence type="ECO:0000256" key="1">
    <source>
        <dbReference type="SAM" id="MobiDB-lite"/>
    </source>
</evidence>
<evidence type="ECO:0000303" key="2">
    <source>
    </source>
</evidence>
<evidence type="ECO:0000305" key="3"/>
<proteinExistence type="evidence at transcript level"/>
<protein>
    <recommendedName>
        <fullName evidence="2">Large ribosomal subunit protein eL15z</fullName>
    </recommendedName>
    <alternativeName>
        <fullName>60S ribosomal protein L15-1</fullName>
    </alternativeName>
</protein>
<sequence length="204" mass="24239">MGAYKYVSELWRKKQSDVMRFLQRVRCWEYRQQPSIVRLVRPTRPDKARRLGYKAKQGFVVYRVRVRRGGRKRPVPKGIVYGKPTNQGVTQLKFQRSKRSVAEERAGRKLGGLRVVNSYWLNEDSTYKYYEIILVDPAHNAVRNDPRINWICNPVHKHRELRGLTSEGKKNRGLRGKGHNNHKNRPSRRATWKKNNSLSLRRYR</sequence>
<organism>
    <name type="scientific">Arabidopsis thaliana</name>
    <name type="common">Mouse-ear cress</name>
    <dbReference type="NCBI Taxonomy" id="3702"/>
    <lineage>
        <taxon>Eukaryota</taxon>
        <taxon>Viridiplantae</taxon>
        <taxon>Streptophyta</taxon>
        <taxon>Embryophyta</taxon>
        <taxon>Tracheophyta</taxon>
        <taxon>Spermatophyta</taxon>
        <taxon>Magnoliopsida</taxon>
        <taxon>eudicotyledons</taxon>
        <taxon>Gunneridae</taxon>
        <taxon>Pentapetalae</taxon>
        <taxon>rosids</taxon>
        <taxon>malvids</taxon>
        <taxon>Brassicales</taxon>
        <taxon>Brassicaceae</taxon>
        <taxon>Camelineae</taxon>
        <taxon>Arabidopsis</taxon>
    </lineage>
</organism>
<dbReference type="EMBL" id="Z97341">
    <property type="protein sequence ID" value="CAB10447.1"/>
    <property type="molecule type" value="Genomic_DNA"/>
</dbReference>
<dbReference type="EMBL" id="AL161544">
    <property type="protein sequence ID" value="CAB78714.1"/>
    <property type="molecule type" value="Genomic_DNA"/>
</dbReference>
<dbReference type="EMBL" id="CP002687">
    <property type="protein sequence ID" value="AEE83791.1"/>
    <property type="molecule type" value="Genomic_DNA"/>
</dbReference>
<dbReference type="EMBL" id="AF370352">
    <property type="protein sequence ID" value="AAK44167.1"/>
    <property type="molecule type" value="mRNA"/>
</dbReference>
<dbReference type="EMBL" id="AY058841">
    <property type="protein sequence ID" value="AAL24229.1"/>
    <property type="molecule type" value="mRNA"/>
</dbReference>
<dbReference type="EMBL" id="AY075603">
    <property type="protein sequence ID" value="AAL91619.1"/>
    <property type="molecule type" value="mRNA"/>
</dbReference>
<dbReference type="EMBL" id="AY133797">
    <property type="protein sequence ID" value="AAM91731.1"/>
    <property type="molecule type" value="mRNA"/>
</dbReference>
<dbReference type="EMBL" id="AY143818">
    <property type="protein sequence ID" value="AAN28757.1"/>
    <property type="molecule type" value="mRNA"/>
</dbReference>
<dbReference type="EMBL" id="AY086316">
    <property type="protein sequence ID" value="AAM64387.1"/>
    <property type="molecule type" value="mRNA"/>
</dbReference>
<dbReference type="PIR" id="E71434">
    <property type="entry name" value="E71434"/>
</dbReference>
<dbReference type="RefSeq" id="NP_193405.1">
    <property type="nucleotide sequence ID" value="NM_117773.4"/>
</dbReference>
<dbReference type="SMR" id="O23515"/>
<dbReference type="BioGRID" id="12668">
    <property type="interactions" value="170"/>
</dbReference>
<dbReference type="FunCoup" id="O23515">
    <property type="interactions" value="3743"/>
</dbReference>
<dbReference type="STRING" id="3702.O23515"/>
<dbReference type="iPTMnet" id="O23515"/>
<dbReference type="PaxDb" id="3702-AT4G16720.1"/>
<dbReference type="ProteomicsDB" id="237021"/>
<dbReference type="EnsemblPlants" id="AT4G16720.1">
    <property type="protein sequence ID" value="AT4G16720.1"/>
    <property type="gene ID" value="AT4G16720"/>
</dbReference>
<dbReference type="GeneID" id="827375"/>
<dbReference type="Gramene" id="AT4G16720.1">
    <property type="protein sequence ID" value="AT4G16720.1"/>
    <property type="gene ID" value="AT4G16720"/>
</dbReference>
<dbReference type="KEGG" id="ath:AT4G16720"/>
<dbReference type="Araport" id="AT4G16720"/>
<dbReference type="TAIR" id="AT4G16720"/>
<dbReference type="eggNOG" id="KOG1678">
    <property type="taxonomic scope" value="Eukaryota"/>
</dbReference>
<dbReference type="HOGENOM" id="CLU_080796_0_0_1"/>
<dbReference type="InParanoid" id="O23515"/>
<dbReference type="OMA" id="YIRDAWK"/>
<dbReference type="OrthoDB" id="10255148at2759"/>
<dbReference type="PhylomeDB" id="O23515"/>
<dbReference type="CD-CODE" id="4299E36E">
    <property type="entry name" value="Nucleolus"/>
</dbReference>
<dbReference type="PRO" id="PR:O23515"/>
<dbReference type="Proteomes" id="UP000006548">
    <property type="component" value="Chromosome 4"/>
</dbReference>
<dbReference type="ExpressionAtlas" id="O23515">
    <property type="expression patterns" value="baseline and differential"/>
</dbReference>
<dbReference type="GO" id="GO:0005829">
    <property type="term" value="C:cytosol"/>
    <property type="evidence" value="ECO:0007005"/>
    <property type="project" value="TAIR"/>
</dbReference>
<dbReference type="GO" id="GO:0022625">
    <property type="term" value="C:cytosolic large ribosomal subunit"/>
    <property type="evidence" value="ECO:0007005"/>
    <property type="project" value="TAIR"/>
</dbReference>
<dbReference type="GO" id="GO:0022626">
    <property type="term" value="C:cytosolic ribosome"/>
    <property type="evidence" value="ECO:0007005"/>
    <property type="project" value="TAIR"/>
</dbReference>
<dbReference type="GO" id="GO:0000325">
    <property type="term" value="C:plant-type vacuole"/>
    <property type="evidence" value="ECO:0007005"/>
    <property type="project" value="TAIR"/>
</dbReference>
<dbReference type="GO" id="GO:0003729">
    <property type="term" value="F:mRNA binding"/>
    <property type="evidence" value="ECO:0000314"/>
    <property type="project" value="TAIR"/>
</dbReference>
<dbReference type="GO" id="GO:0003735">
    <property type="term" value="F:structural constituent of ribosome"/>
    <property type="evidence" value="ECO:0000314"/>
    <property type="project" value="CAFA"/>
</dbReference>
<dbReference type="GO" id="GO:0006412">
    <property type="term" value="P:translation"/>
    <property type="evidence" value="ECO:0007669"/>
    <property type="project" value="InterPro"/>
</dbReference>
<dbReference type="FunFam" id="3.40.1120.10:FF:000001">
    <property type="entry name" value="Ribosomal protein L15"/>
    <property type="match status" value="1"/>
</dbReference>
<dbReference type="Gene3D" id="3.40.1120.10">
    <property type="entry name" value="Ribosomal protein l15e"/>
    <property type="match status" value="1"/>
</dbReference>
<dbReference type="InterPro" id="IPR024794">
    <property type="entry name" value="Rbsml_eL15_core_dom_sf"/>
</dbReference>
<dbReference type="InterPro" id="IPR000439">
    <property type="entry name" value="Ribosomal_eL15"/>
</dbReference>
<dbReference type="InterPro" id="IPR020925">
    <property type="entry name" value="Ribosomal_eL15_CS"/>
</dbReference>
<dbReference type="InterPro" id="IPR012678">
    <property type="entry name" value="Ribosomal_uL23/eL15/eS24_sf"/>
</dbReference>
<dbReference type="NCBIfam" id="NF003269">
    <property type="entry name" value="PRK04243.1"/>
    <property type="match status" value="1"/>
</dbReference>
<dbReference type="PANTHER" id="PTHR11847:SF22">
    <property type="entry name" value="LARGE RIBOSOMAL SUBUNIT PROTEIN EL15Y-RELATED"/>
    <property type="match status" value="1"/>
</dbReference>
<dbReference type="PANTHER" id="PTHR11847">
    <property type="entry name" value="RIBOSOMAL PROTEIN L15"/>
    <property type="match status" value="1"/>
</dbReference>
<dbReference type="Pfam" id="PF00827">
    <property type="entry name" value="Ribosomal_L15e"/>
    <property type="match status" value="1"/>
</dbReference>
<dbReference type="SMART" id="SM01384">
    <property type="entry name" value="Ribosomal_L15e"/>
    <property type="match status" value="1"/>
</dbReference>
<dbReference type="SUPFAM" id="SSF54189">
    <property type="entry name" value="Ribosomal proteins S24e, L23 and L15e"/>
    <property type="match status" value="1"/>
</dbReference>
<dbReference type="PROSITE" id="PS01194">
    <property type="entry name" value="RIBOSOMAL_L15E"/>
    <property type="match status" value="1"/>
</dbReference>